<accession>Q9X806</accession>
<name>QCRB_STRCO</name>
<feature type="chain" id="PRO_0000061928" description="Cytochrome bc1 complex cytochrome b subunit">
    <location>
        <begin position="1"/>
        <end position="545"/>
    </location>
</feature>
<feature type="transmembrane region" description="Helical" evidence="4">
    <location>
        <begin position="54"/>
        <end position="74"/>
    </location>
</feature>
<feature type="transmembrane region" description="Helical" evidence="4">
    <location>
        <begin position="122"/>
        <end position="142"/>
    </location>
</feature>
<feature type="transmembrane region" description="Helical" evidence="4">
    <location>
        <begin position="150"/>
        <end position="170"/>
    </location>
</feature>
<feature type="transmembrane region" description="Helical" evidence="4">
    <location>
        <begin position="182"/>
        <end position="202"/>
    </location>
</feature>
<feature type="transmembrane region" description="Helical" evidence="4">
    <location>
        <begin position="220"/>
        <end position="240"/>
    </location>
</feature>
<feature type="transmembrane region" description="Helical" evidence="4">
    <location>
        <begin position="269"/>
        <end position="289"/>
    </location>
</feature>
<feature type="transmembrane region" description="Helical" evidence="4">
    <location>
        <begin position="335"/>
        <end position="355"/>
    </location>
</feature>
<feature type="transmembrane region" description="Helical" evidence="4">
    <location>
        <begin position="385"/>
        <end position="405"/>
    </location>
</feature>
<feature type="transmembrane region" description="Helical" evidence="4">
    <location>
        <begin position="413"/>
        <end position="433"/>
    </location>
</feature>
<feature type="binding site" description="axial binding residue" evidence="4">
    <location>
        <position position="118"/>
    </location>
    <ligand>
        <name>heme</name>
        <dbReference type="ChEBI" id="CHEBI:30413"/>
        <label>1</label>
    </ligand>
    <ligandPart>
        <name>Fe</name>
        <dbReference type="ChEBI" id="CHEBI:18248"/>
    </ligandPart>
</feature>
<feature type="binding site" description="axial binding residue" evidence="4">
    <location>
        <position position="132"/>
    </location>
    <ligand>
        <name>heme</name>
        <dbReference type="ChEBI" id="CHEBI:30413"/>
        <label>2</label>
    </ligand>
    <ligandPart>
        <name>Fe</name>
        <dbReference type="ChEBI" id="CHEBI:18248"/>
    </ligandPart>
</feature>
<feature type="binding site" description="axial binding residue" evidence="4">
    <location>
        <position position="219"/>
    </location>
    <ligand>
        <name>heme</name>
        <dbReference type="ChEBI" id="CHEBI:30413"/>
        <label>1</label>
    </ligand>
    <ligandPart>
        <name>Fe</name>
        <dbReference type="ChEBI" id="CHEBI:18248"/>
    </ligandPart>
</feature>
<feature type="binding site" description="axial binding residue" evidence="4">
    <location>
        <position position="234"/>
    </location>
    <ligand>
        <name>heme</name>
        <dbReference type="ChEBI" id="CHEBI:30413"/>
        <label>2</label>
    </ligand>
    <ligandPart>
        <name>Fe</name>
        <dbReference type="ChEBI" id="CHEBI:18248"/>
    </ligandPart>
</feature>
<dbReference type="EC" id="7.1.1.8" evidence="2"/>
<dbReference type="EMBL" id="AL939111">
    <property type="protein sequence ID" value="CAB39875.1"/>
    <property type="molecule type" value="Genomic_DNA"/>
</dbReference>
<dbReference type="PIR" id="T35530">
    <property type="entry name" value="T35530"/>
</dbReference>
<dbReference type="RefSeq" id="NP_626404.1">
    <property type="nucleotide sequence ID" value="NC_003888.3"/>
</dbReference>
<dbReference type="RefSeq" id="WP_011028167.1">
    <property type="nucleotide sequence ID" value="NZ_VNID01000001.1"/>
</dbReference>
<dbReference type="SMR" id="Q9X806"/>
<dbReference type="FunCoup" id="Q9X806">
    <property type="interactions" value="46"/>
</dbReference>
<dbReference type="STRING" id="100226.gene:17759746"/>
<dbReference type="TCDB" id="3.D.3.5.4">
    <property type="family name" value="the proton-translocating quinol:cytochrome c reductase (qcr) superfamily"/>
</dbReference>
<dbReference type="PaxDb" id="100226-SCO2148"/>
<dbReference type="KEGG" id="sco:SCO2148"/>
<dbReference type="PATRIC" id="fig|100226.15.peg.2183"/>
<dbReference type="eggNOG" id="COG1290">
    <property type="taxonomic scope" value="Bacteria"/>
</dbReference>
<dbReference type="HOGENOM" id="CLU_031114_2_0_11"/>
<dbReference type="InParanoid" id="Q9X806"/>
<dbReference type="OrthoDB" id="9804503at2"/>
<dbReference type="PhylomeDB" id="Q9X806"/>
<dbReference type="Proteomes" id="UP000001973">
    <property type="component" value="Chromosome"/>
</dbReference>
<dbReference type="GO" id="GO:0016020">
    <property type="term" value="C:membrane"/>
    <property type="evidence" value="ECO:0000318"/>
    <property type="project" value="GO_Central"/>
</dbReference>
<dbReference type="GO" id="GO:0005886">
    <property type="term" value="C:plasma membrane"/>
    <property type="evidence" value="ECO:0007669"/>
    <property type="project" value="UniProtKB-SubCell"/>
</dbReference>
<dbReference type="GO" id="GO:0046872">
    <property type="term" value="F:metal ion binding"/>
    <property type="evidence" value="ECO:0007669"/>
    <property type="project" value="UniProtKB-KW"/>
</dbReference>
<dbReference type="GO" id="GO:0008121">
    <property type="term" value="F:ubiquinol-cytochrome-c reductase activity"/>
    <property type="evidence" value="ECO:0007669"/>
    <property type="project" value="UniProtKB-EC"/>
</dbReference>
<dbReference type="GO" id="GO:0022904">
    <property type="term" value="P:respiratory electron transport chain"/>
    <property type="evidence" value="ECO:0007669"/>
    <property type="project" value="InterPro"/>
</dbReference>
<dbReference type="FunFam" id="1.20.810.10:FF:000007">
    <property type="entry name" value="Ubiquinol-cytochrome C reductase B subunit"/>
    <property type="match status" value="1"/>
</dbReference>
<dbReference type="Gene3D" id="1.20.810.10">
    <property type="entry name" value="Cytochrome Bc1 Complex, Chain C"/>
    <property type="match status" value="1"/>
</dbReference>
<dbReference type="InterPro" id="IPR005797">
    <property type="entry name" value="Cyt_b/b6_N"/>
</dbReference>
<dbReference type="InterPro" id="IPR027387">
    <property type="entry name" value="Cytb/b6-like_sf"/>
</dbReference>
<dbReference type="InterPro" id="IPR016174">
    <property type="entry name" value="Di-haem_cyt_TM"/>
</dbReference>
<dbReference type="PANTHER" id="PTHR19271">
    <property type="entry name" value="CYTOCHROME B"/>
    <property type="match status" value="1"/>
</dbReference>
<dbReference type="PANTHER" id="PTHR19271:SF16">
    <property type="entry name" value="CYTOCHROME B"/>
    <property type="match status" value="1"/>
</dbReference>
<dbReference type="Pfam" id="PF13631">
    <property type="entry name" value="Cytochrom_B_N_2"/>
    <property type="match status" value="1"/>
</dbReference>
<dbReference type="SUPFAM" id="SSF81342">
    <property type="entry name" value="Transmembrane di-heme cytochromes"/>
    <property type="match status" value="1"/>
</dbReference>
<dbReference type="PROSITE" id="PS51002">
    <property type="entry name" value="CYTB_NTER"/>
    <property type="match status" value="1"/>
</dbReference>
<keyword id="KW-1003">Cell membrane</keyword>
<keyword id="KW-0249">Electron transport</keyword>
<keyword id="KW-0349">Heme</keyword>
<keyword id="KW-0408">Iron</keyword>
<keyword id="KW-0472">Membrane</keyword>
<keyword id="KW-0479">Metal-binding</keyword>
<keyword id="KW-1185">Reference proteome</keyword>
<keyword id="KW-0679">Respiratory chain</keyword>
<keyword id="KW-1278">Translocase</keyword>
<keyword id="KW-0812">Transmembrane</keyword>
<keyword id="KW-1133">Transmembrane helix</keyword>
<keyword id="KW-0813">Transport</keyword>
<evidence type="ECO:0000250" key="1">
    <source>
        <dbReference type="UniProtKB" id="P00163"/>
    </source>
</evidence>
<evidence type="ECO:0000250" key="2">
    <source>
        <dbReference type="UniProtKB" id="P9WP37"/>
    </source>
</evidence>
<evidence type="ECO:0000255" key="3"/>
<evidence type="ECO:0000255" key="4">
    <source>
        <dbReference type="PROSITE-ProRule" id="PRU00968"/>
    </source>
</evidence>
<sequence>MSTAANEPSRSRGKAPAGERVADWADGRLGIYSLAKANMRKIFPDHWSFMLGEVCLYSFIIIILTGVYLTLFFHPSMAEVEYHGSYVPLQGQMMSEAYASTLDISFDVRGGLLIRQIHHWAALIFLAGMFVHMMRVFFTGAFRKPREVNWLFGFLLLVLGMFTGFTGYSLPDDLLSGTGIRFMEGAILSVPIVGTYISFFLFGGEFPGHDFVSRFYSIHILLLPGIMLGLLVGHLILVFYHKHTQFAGPGKTNKNVVGMPLLPVYTAKAGGFFFLVFGVISVVSAIATINPIWAIGPYRPDQVSTGAQPDWYMGFSEGLIRVMPGWEINAWGHTLVLGVFVPLLIFPLVLAAIAVYPFIESWVTGDKREHHILDRPRNAPTRTAFGVAWLTVYFVLLIGGGNDLWATHFHLSINAITWFVRIAFFVGPVVAFIATKRICLGLQRRDKDKVLHGRESGIIKRLPHGEFIEVHEPLSQEQLHTLTAHEQYQPAEIGPTVDENGVERKVSGTQKLRAKLSESYYGEESQIPKPTVEEYKEITSGHGHH</sequence>
<gene>
    <name type="primary">qcrB</name>
    <name type="ordered locus">SCO2148</name>
    <name type="ORF">SC6G10.21c</name>
</gene>
<reference key="1">
    <citation type="journal article" date="2002" name="Nature">
        <title>Complete genome sequence of the model actinomycete Streptomyces coelicolor A3(2).</title>
        <authorList>
            <person name="Bentley S.D."/>
            <person name="Chater K.F."/>
            <person name="Cerdeno-Tarraga A.-M."/>
            <person name="Challis G.L."/>
            <person name="Thomson N.R."/>
            <person name="James K.D."/>
            <person name="Harris D.E."/>
            <person name="Quail M.A."/>
            <person name="Kieser H."/>
            <person name="Harper D."/>
            <person name="Bateman A."/>
            <person name="Brown S."/>
            <person name="Chandra G."/>
            <person name="Chen C.W."/>
            <person name="Collins M."/>
            <person name="Cronin A."/>
            <person name="Fraser A."/>
            <person name="Goble A."/>
            <person name="Hidalgo J."/>
            <person name="Hornsby T."/>
            <person name="Howarth S."/>
            <person name="Huang C.-H."/>
            <person name="Kieser T."/>
            <person name="Larke L."/>
            <person name="Murphy L.D."/>
            <person name="Oliver K."/>
            <person name="O'Neil S."/>
            <person name="Rabbinowitsch E."/>
            <person name="Rajandream M.A."/>
            <person name="Rutherford K.M."/>
            <person name="Rutter S."/>
            <person name="Seeger K."/>
            <person name="Saunders D."/>
            <person name="Sharp S."/>
            <person name="Squares R."/>
            <person name="Squares S."/>
            <person name="Taylor K."/>
            <person name="Warren T."/>
            <person name="Wietzorrek A."/>
            <person name="Woodward J.R."/>
            <person name="Barrell B.G."/>
            <person name="Parkhill J."/>
            <person name="Hopwood D.A."/>
        </authorList>
    </citation>
    <scope>NUCLEOTIDE SEQUENCE [LARGE SCALE GENOMIC DNA]</scope>
    <source>
        <strain>ATCC BAA-471 / A3(2) / M145</strain>
    </source>
</reference>
<proteinExistence type="inferred from homology"/>
<organism>
    <name type="scientific">Streptomyces coelicolor (strain ATCC BAA-471 / A3(2) / M145)</name>
    <dbReference type="NCBI Taxonomy" id="100226"/>
    <lineage>
        <taxon>Bacteria</taxon>
        <taxon>Bacillati</taxon>
        <taxon>Actinomycetota</taxon>
        <taxon>Actinomycetes</taxon>
        <taxon>Kitasatosporales</taxon>
        <taxon>Streptomycetaceae</taxon>
        <taxon>Streptomyces</taxon>
        <taxon>Streptomyces albidoflavus group</taxon>
    </lineage>
</organism>
<comment type="function">
    <text evidence="2">Cytochrome b subunit of the cytochrome bc1 complex, an essential component of the respiratory electron transport chain required for ATP synthesis. The bc1 complex catalyzes the oxidation of ubiquinol and the reduction of cytochrome c in the respiratory chain. The bc1 complex operates through a Q-cycle mechanism that couples electron transfer to generation of the proton gradient that drives ATP synthesis. The cytochrome b subunit contains two ubiquinol reactive sites: the oxidation (QP) site and the reduction (QN) site.</text>
</comment>
<comment type="catalytic activity">
    <reaction evidence="2">
        <text>a quinol + 2 Fe(III)-[cytochrome c](out) = a quinone + 2 Fe(II)-[cytochrome c](out) + 2 H(+)(out)</text>
        <dbReference type="Rhea" id="RHEA:11484"/>
        <dbReference type="Rhea" id="RHEA-COMP:10350"/>
        <dbReference type="Rhea" id="RHEA-COMP:14399"/>
        <dbReference type="ChEBI" id="CHEBI:15378"/>
        <dbReference type="ChEBI" id="CHEBI:24646"/>
        <dbReference type="ChEBI" id="CHEBI:29033"/>
        <dbReference type="ChEBI" id="CHEBI:29034"/>
        <dbReference type="ChEBI" id="CHEBI:132124"/>
        <dbReference type="EC" id="7.1.1.8"/>
    </reaction>
</comment>
<comment type="cofactor">
    <cofactor evidence="1">
        <name>heme</name>
        <dbReference type="ChEBI" id="CHEBI:30413"/>
    </cofactor>
    <text evidence="1">Binds 2 heme groups non-covalently per subunit.</text>
</comment>
<comment type="subunit">
    <text evidence="2">The cytochrome bc1 complex is composed of a cytochrome b (QcrB), the Rieske iron-sulfur protein (QcrA) and a diheme cytochrome c (QcrC) subunit.</text>
</comment>
<comment type="subcellular location">
    <subcellularLocation>
        <location evidence="3">Cell membrane</location>
        <topology evidence="3">Multi-pass membrane protein</topology>
    </subcellularLocation>
</comment>
<comment type="similarity">
    <text evidence="4">Belongs to the cytochrome b family.</text>
</comment>
<protein>
    <recommendedName>
        <fullName>Cytochrome bc1 complex cytochrome b subunit</fullName>
        <ecNumber evidence="2">7.1.1.8</ecNumber>
    </recommendedName>
    <alternativeName>
        <fullName>Cytochrome bc1 reductase complex subunit QcrB</fullName>
    </alternativeName>
    <alternativeName>
        <fullName>Ubiquinol--cytochrome c reductase cytochrome b subunit</fullName>
    </alternativeName>
</protein>